<feature type="chain" id="PRO_1000118472" description="Methionyl-tRNA formyltransferase">
    <location>
        <begin position="1"/>
        <end position="312"/>
    </location>
</feature>
<feature type="binding site" evidence="1">
    <location>
        <begin position="107"/>
        <end position="110"/>
    </location>
    <ligand>
        <name>(6S)-5,6,7,8-tetrahydrofolate</name>
        <dbReference type="ChEBI" id="CHEBI:57453"/>
    </ligand>
</feature>
<comment type="function">
    <text evidence="1">Attaches a formyl group to the free amino group of methionyl-tRNA(fMet). The formyl group appears to play a dual role in the initiator identity of N-formylmethionyl-tRNA by promoting its recognition by IF2 and preventing the misappropriation of this tRNA by the elongation apparatus.</text>
</comment>
<comment type="catalytic activity">
    <reaction evidence="1">
        <text>L-methionyl-tRNA(fMet) + (6R)-10-formyltetrahydrofolate = N-formyl-L-methionyl-tRNA(fMet) + (6S)-5,6,7,8-tetrahydrofolate + H(+)</text>
        <dbReference type="Rhea" id="RHEA:24380"/>
        <dbReference type="Rhea" id="RHEA-COMP:9952"/>
        <dbReference type="Rhea" id="RHEA-COMP:9953"/>
        <dbReference type="ChEBI" id="CHEBI:15378"/>
        <dbReference type="ChEBI" id="CHEBI:57453"/>
        <dbReference type="ChEBI" id="CHEBI:78530"/>
        <dbReference type="ChEBI" id="CHEBI:78844"/>
        <dbReference type="ChEBI" id="CHEBI:195366"/>
        <dbReference type="EC" id="2.1.2.9"/>
    </reaction>
</comment>
<comment type="similarity">
    <text evidence="1">Belongs to the Fmt family.</text>
</comment>
<reference key="1">
    <citation type="journal article" date="2011" name="J. Bacteriol.">
        <title>Whole-genome sequences of thirteen isolates of Borrelia burgdorferi.</title>
        <authorList>
            <person name="Schutzer S.E."/>
            <person name="Fraser-Liggett C.M."/>
            <person name="Casjens S.R."/>
            <person name="Qiu W.G."/>
            <person name="Dunn J.J."/>
            <person name="Mongodin E.F."/>
            <person name="Luft B.J."/>
        </authorList>
    </citation>
    <scope>NUCLEOTIDE SEQUENCE [LARGE SCALE GENOMIC DNA]</scope>
    <source>
        <strain>ZS7</strain>
    </source>
</reference>
<keyword id="KW-0648">Protein biosynthesis</keyword>
<keyword id="KW-0808">Transferase</keyword>
<sequence>MKIFFVSSSSIALEVFKEIVKHYEVVGVLTLPDRPKGRGQKLSQNVIKSEAIARNIKVLDPLILDDNVLNLVRDLNPDLMLVFSYGKIFKKEFLDLFPKGCINVHPSLLPKYRGVSPIQSAILNGDCVSGVTIQSMALEMDSGNILVQKNFKIRSYDTSHDISKLVSSLSPSLVLEALEKISKGFLGIPQKSSEATFCSFLKKESGFIDFNLSAFEIKNKINACNPWPLVRVRLDYNDIIFHRADFLEVDLYKERKIGEIVDFNPEKGLFVNTGKGILLLLEVQRPGRKVLDFKSFYNGSRQLIGQVFSSIE</sequence>
<evidence type="ECO:0000255" key="1">
    <source>
        <dbReference type="HAMAP-Rule" id="MF_00182"/>
    </source>
</evidence>
<dbReference type="EC" id="2.1.2.9" evidence="1"/>
<dbReference type="EMBL" id="CP001205">
    <property type="protein sequence ID" value="ACK75117.1"/>
    <property type="molecule type" value="Genomic_DNA"/>
</dbReference>
<dbReference type="RefSeq" id="WP_002658299.1">
    <property type="nucleotide sequence ID" value="NC_011728.1"/>
</dbReference>
<dbReference type="SMR" id="B7J100"/>
<dbReference type="GeneID" id="56568153"/>
<dbReference type="KEGG" id="bbz:BbuZS7_0065"/>
<dbReference type="HOGENOM" id="CLU_033347_1_1_12"/>
<dbReference type="Proteomes" id="UP000006901">
    <property type="component" value="Chromosome"/>
</dbReference>
<dbReference type="GO" id="GO:0005829">
    <property type="term" value="C:cytosol"/>
    <property type="evidence" value="ECO:0007669"/>
    <property type="project" value="TreeGrafter"/>
</dbReference>
<dbReference type="GO" id="GO:0004479">
    <property type="term" value="F:methionyl-tRNA formyltransferase activity"/>
    <property type="evidence" value="ECO:0007669"/>
    <property type="project" value="UniProtKB-UniRule"/>
</dbReference>
<dbReference type="CDD" id="cd08646">
    <property type="entry name" value="FMT_core_Met-tRNA-FMT_N"/>
    <property type="match status" value="1"/>
</dbReference>
<dbReference type="CDD" id="cd08704">
    <property type="entry name" value="Met_tRNA_FMT_C"/>
    <property type="match status" value="1"/>
</dbReference>
<dbReference type="Gene3D" id="3.10.25.10">
    <property type="entry name" value="Formyl transferase, C-terminal domain"/>
    <property type="match status" value="1"/>
</dbReference>
<dbReference type="Gene3D" id="3.40.50.170">
    <property type="entry name" value="Formyl transferase, N-terminal domain"/>
    <property type="match status" value="1"/>
</dbReference>
<dbReference type="HAMAP" id="MF_00182">
    <property type="entry name" value="Formyl_trans"/>
    <property type="match status" value="1"/>
</dbReference>
<dbReference type="InterPro" id="IPR005794">
    <property type="entry name" value="Fmt"/>
</dbReference>
<dbReference type="InterPro" id="IPR005793">
    <property type="entry name" value="Formyl_trans_C"/>
</dbReference>
<dbReference type="InterPro" id="IPR037022">
    <property type="entry name" value="Formyl_trans_C_sf"/>
</dbReference>
<dbReference type="InterPro" id="IPR002376">
    <property type="entry name" value="Formyl_transf_N"/>
</dbReference>
<dbReference type="InterPro" id="IPR036477">
    <property type="entry name" value="Formyl_transf_N_sf"/>
</dbReference>
<dbReference type="InterPro" id="IPR011034">
    <property type="entry name" value="Formyl_transferase-like_C_sf"/>
</dbReference>
<dbReference type="InterPro" id="IPR044135">
    <property type="entry name" value="Met-tRNA-FMT_C"/>
</dbReference>
<dbReference type="InterPro" id="IPR041711">
    <property type="entry name" value="Met-tRNA-FMT_N"/>
</dbReference>
<dbReference type="NCBIfam" id="TIGR00460">
    <property type="entry name" value="fmt"/>
    <property type="match status" value="1"/>
</dbReference>
<dbReference type="PANTHER" id="PTHR11138">
    <property type="entry name" value="METHIONYL-TRNA FORMYLTRANSFERASE"/>
    <property type="match status" value="1"/>
</dbReference>
<dbReference type="PANTHER" id="PTHR11138:SF5">
    <property type="entry name" value="METHIONYL-TRNA FORMYLTRANSFERASE, MITOCHONDRIAL"/>
    <property type="match status" value="1"/>
</dbReference>
<dbReference type="Pfam" id="PF02911">
    <property type="entry name" value="Formyl_trans_C"/>
    <property type="match status" value="1"/>
</dbReference>
<dbReference type="Pfam" id="PF00551">
    <property type="entry name" value="Formyl_trans_N"/>
    <property type="match status" value="1"/>
</dbReference>
<dbReference type="SUPFAM" id="SSF50486">
    <property type="entry name" value="FMT C-terminal domain-like"/>
    <property type="match status" value="1"/>
</dbReference>
<dbReference type="SUPFAM" id="SSF53328">
    <property type="entry name" value="Formyltransferase"/>
    <property type="match status" value="1"/>
</dbReference>
<protein>
    <recommendedName>
        <fullName evidence="1">Methionyl-tRNA formyltransferase</fullName>
        <ecNumber evidence="1">2.1.2.9</ecNumber>
    </recommendedName>
</protein>
<name>FMT_BORBZ</name>
<accession>B7J100</accession>
<proteinExistence type="inferred from homology"/>
<organism>
    <name type="scientific">Borreliella burgdorferi (strain ZS7)</name>
    <name type="common">Borrelia burgdorferi</name>
    <dbReference type="NCBI Taxonomy" id="445985"/>
    <lineage>
        <taxon>Bacteria</taxon>
        <taxon>Pseudomonadati</taxon>
        <taxon>Spirochaetota</taxon>
        <taxon>Spirochaetia</taxon>
        <taxon>Spirochaetales</taxon>
        <taxon>Borreliaceae</taxon>
        <taxon>Borreliella</taxon>
    </lineage>
</organism>
<gene>
    <name evidence="1" type="primary">fmt</name>
    <name type="ordered locus">BbuZS7_0065</name>
</gene>